<name>DPO4_STRPN</name>
<reference key="1">
    <citation type="journal article" date="2001" name="Science">
        <title>Complete genome sequence of a virulent isolate of Streptococcus pneumoniae.</title>
        <authorList>
            <person name="Tettelin H."/>
            <person name="Nelson K.E."/>
            <person name="Paulsen I.T."/>
            <person name="Eisen J.A."/>
            <person name="Read T.D."/>
            <person name="Peterson S.N."/>
            <person name="Heidelberg J.F."/>
            <person name="DeBoy R.T."/>
            <person name="Haft D.H."/>
            <person name="Dodson R.J."/>
            <person name="Durkin A.S."/>
            <person name="Gwinn M.L."/>
            <person name="Kolonay J.F."/>
            <person name="Nelson W.C."/>
            <person name="Peterson J.D."/>
            <person name="Umayam L.A."/>
            <person name="White O."/>
            <person name="Salzberg S.L."/>
            <person name="Lewis M.R."/>
            <person name="Radune D."/>
            <person name="Holtzapple E.K."/>
            <person name="Khouri H.M."/>
            <person name="Wolf A.M."/>
            <person name="Utterback T.R."/>
            <person name="Hansen C.L."/>
            <person name="McDonald L.A."/>
            <person name="Feldblyum T.V."/>
            <person name="Angiuoli S.V."/>
            <person name="Dickinson T."/>
            <person name="Hickey E.K."/>
            <person name="Holt I.E."/>
            <person name="Loftus B.J."/>
            <person name="Yang F."/>
            <person name="Smith H.O."/>
            <person name="Venter J.C."/>
            <person name="Dougherty B.A."/>
            <person name="Morrison D.A."/>
            <person name="Hollingshead S.K."/>
            <person name="Fraser C.M."/>
        </authorList>
    </citation>
    <scope>NUCLEOTIDE SEQUENCE [LARGE SCALE GENOMIC DNA]</scope>
    <source>
        <strain>ATCC BAA-334 / TIGR4</strain>
    </source>
</reference>
<comment type="function">
    <text evidence="1">Poorly processive, error-prone DNA polymerase involved in untargeted mutagenesis. Copies undamaged DNA at stalled replication forks, which arise in vivo from mismatched or misaligned primer ends. These misaligned primers can be extended by PolIV. Exhibits no 3'-5' exonuclease (proofreading) activity. May be involved in translesional synthesis, in conjunction with the beta clamp from PolIII.</text>
</comment>
<comment type="catalytic activity">
    <reaction evidence="1">
        <text>DNA(n) + a 2'-deoxyribonucleoside 5'-triphosphate = DNA(n+1) + diphosphate</text>
        <dbReference type="Rhea" id="RHEA:22508"/>
        <dbReference type="Rhea" id="RHEA-COMP:17339"/>
        <dbReference type="Rhea" id="RHEA-COMP:17340"/>
        <dbReference type="ChEBI" id="CHEBI:33019"/>
        <dbReference type="ChEBI" id="CHEBI:61560"/>
        <dbReference type="ChEBI" id="CHEBI:173112"/>
        <dbReference type="EC" id="2.7.7.7"/>
    </reaction>
</comment>
<comment type="cofactor">
    <cofactor evidence="1">
        <name>Mg(2+)</name>
        <dbReference type="ChEBI" id="CHEBI:18420"/>
    </cofactor>
    <text evidence="1">Binds 2 magnesium ions per subunit.</text>
</comment>
<comment type="subunit">
    <text evidence="1">Monomer.</text>
</comment>
<comment type="subcellular location">
    <subcellularLocation>
        <location evidence="1">Cytoplasm</location>
    </subcellularLocation>
</comment>
<comment type="similarity">
    <text evidence="1">Belongs to the DNA polymerase type-Y family.</text>
</comment>
<accession>Q97SC7</accession>
<dbReference type="EC" id="2.7.7.7" evidence="1"/>
<dbReference type="EMBL" id="AE005672">
    <property type="protein sequence ID" value="AAK74618.1"/>
    <property type="molecule type" value="Genomic_DNA"/>
</dbReference>
<dbReference type="PIR" id="A95053">
    <property type="entry name" value="A95053"/>
</dbReference>
<dbReference type="RefSeq" id="WP_000904591.1">
    <property type="nucleotide sequence ID" value="NZ_CP155539.1"/>
</dbReference>
<dbReference type="SMR" id="Q97SC7"/>
<dbReference type="PaxDb" id="170187-SP_0458"/>
<dbReference type="EnsemblBacteria" id="AAK74618">
    <property type="protein sequence ID" value="AAK74618"/>
    <property type="gene ID" value="SP_0458"/>
</dbReference>
<dbReference type="KEGG" id="spn:SP_0458"/>
<dbReference type="eggNOG" id="COG0389">
    <property type="taxonomic scope" value="Bacteria"/>
</dbReference>
<dbReference type="PhylomeDB" id="Q97SC7"/>
<dbReference type="BioCyc" id="SPNE170187:G1FZB-474-MONOMER"/>
<dbReference type="Proteomes" id="UP000000585">
    <property type="component" value="Chromosome"/>
</dbReference>
<dbReference type="GO" id="GO:0005829">
    <property type="term" value="C:cytosol"/>
    <property type="evidence" value="ECO:0007669"/>
    <property type="project" value="TreeGrafter"/>
</dbReference>
<dbReference type="GO" id="GO:0003684">
    <property type="term" value="F:damaged DNA binding"/>
    <property type="evidence" value="ECO:0007669"/>
    <property type="project" value="InterPro"/>
</dbReference>
<dbReference type="GO" id="GO:0003887">
    <property type="term" value="F:DNA-directed DNA polymerase activity"/>
    <property type="evidence" value="ECO:0007669"/>
    <property type="project" value="UniProtKB-UniRule"/>
</dbReference>
<dbReference type="GO" id="GO:0000287">
    <property type="term" value="F:magnesium ion binding"/>
    <property type="evidence" value="ECO:0007669"/>
    <property type="project" value="UniProtKB-UniRule"/>
</dbReference>
<dbReference type="GO" id="GO:0006261">
    <property type="term" value="P:DNA-templated DNA replication"/>
    <property type="evidence" value="ECO:0007669"/>
    <property type="project" value="UniProtKB-UniRule"/>
</dbReference>
<dbReference type="GO" id="GO:0042276">
    <property type="term" value="P:error-prone translesion synthesis"/>
    <property type="evidence" value="ECO:0007669"/>
    <property type="project" value="TreeGrafter"/>
</dbReference>
<dbReference type="GO" id="GO:0009432">
    <property type="term" value="P:SOS response"/>
    <property type="evidence" value="ECO:0007669"/>
    <property type="project" value="TreeGrafter"/>
</dbReference>
<dbReference type="CDD" id="cd03586">
    <property type="entry name" value="PolY_Pol_IV_kappa"/>
    <property type="match status" value="1"/>
</dbReference>
<dbReference type="FunFam" id="3.40.1170.60:FF:000001">
    <property type="entry name" value="DNA polymerase IV"/>
    <property type="match status" value="1"/>
</dbReference>
<dbReference type="Gene3D" id="3.30.70.270">
    <property type="match status" value="1"/>
</dbReference>
<dbReference type="Gene3D" id="3.40.1170.60">
    <property type="match status" value="1"/>
</dbReference>
<dbReference type="Gene3D" id="1.10.150.20">
    <property type="entry name" value="5' to 3' exonuclease, C-terminal subdomain"/>
    <property type="match status" value="1"/>
</dbReference>
<dbReference type="Gene3D" id="3.30.1490.100">
    <property type="entry name" value="DNA polymerase, Y-family, little finger domain"/>
    <property type="match status" value="1"/>
</dbReference>
<dbReference type="HAMAP" id="MF_01113">
    <property type="entry name" value="DNApol_IV"/>
    <property type="match status" value="1"/>
</dbReference>
<dbReference type="InterPro" id="IPR043502">
    <property type="entry name" value="DNA/RNA_pol_sf"/>
</dbReference>
<dbReference type="InterPro" id="IPR036775">
    <property type="entry name" value="DNA_pol_Y-fam_lit_finger_sf"/>
</dbReference>
<dbReference type="InterPro" id="IPR017961">
    <property type="entry name" value="DNA_pol_Y-fam_little_finger"/>
</dbReference>
<dbReference type="InterPro" id="IPR050116">
    <property type="entry name" value="DNA_polymerase-Y"/>
</dbReference>
<dbReference type="InterPro" id="IPR022880">
    <property type="entry name" value="DNApol_IV"/>
</dbReference>
<dbReference type="InterPro" id="IPR024728">
    <property type="entry name" value="PolY_HhH_motif"/>
</dbReference>
<dbReference type="InterPro" id="IPR043128">
    <property type="entry name" value="Rev_trsase/Diguanyl_cyclase"/>
</dbReference>
<dbReference type="InterPro" id="IPR001126">
    <property type="entry name" value="UmuC"/>
</dbReference>
<dbReference type="NCBIfam" id="NF002677">
    <property type="entry name" value="PRK02406.1"/>
    <property type="match status" value="1"/>
</dbReference>
<dbReference type="PANTHER" id="PTHR11076:SF33">
    <property type="entry name" value="DNA POLYMERASE KAPPA"/>
    <property type="match status" value="1"/>
</dbReference>
<dbReference type="PANTHER" id="PTHR11076">
    <property type="entry name" value="DNA REPAIR POLYMERASE UMUC / TRANSFERASE FAMILY MEMBER"/>
    <property type="match status" value="1"/>
</dbReference>
<dbReference type="Pfam" id="PF00817">
    <property type="entry name" value="IMS"/>
    <property type="match status" value="1"/>
</dbReference>
<dbReference type="Pfam" id="PF11799">
    <property type="entry name" value="IMS_C"/>
    <property type="match status" value="1"/>
</dbReference>
<dbReference type="Pfam" id="PF11798">
    <property type="entry name" value="IMS_HHH"/>
    <property type="match status" value="1"/>
</dbReference>
<dbReference type="SUPFAM" id="SSF56672">
    <property type="entry name" value="DNA/RNA polymerases"/>
    <property type="match status" value="1"/>
</dbReference>
<dbReference type="SUPFAM" id="SSF100879">
    <property type="entry name" value="Lesion bypass DNA polymerase (Y-family), little finger domain"/>
    <property type="match status" value="1"/>
</dbReference>
<dbReference type="PROSITE" id="PS50173">
    <property type="entry name" value="UMUC"/>
    <property type="match status" value="1"/>
</dbReference>
<protein>
    <recommendedName>
        <fullName evidence="1">DNA polymerase IV</fullName>
        <shortName evidence="1">Pol IV</shortName>
        <ecNumber evidence="1">2.7.7.7</ecNumber>
    </recommendedName>
</protein>
<keyword id="KW-0963">Cytoplasm</keyword>
<keyword id="KW-0227">DNA damage</keyword>
<keyword id="KW-0234">DNA repair</keyword>
<keyword id="KW-0235">DNA replication</keyword>
<keyword id="KW-0238">DNA-binding</keyword>
<keyword id="KW-0239">DNA-directed DNA polymerase</keyword>
<keyword id="KW-0460">Magnesium</keyword>
<keyword id="KW-0479">Metal-binding</keyword>
<keyword id="KW-0515">Mutator protein</keyword>
<keyword id="KW-0548">Nucleotidyltransferase</keyword>
<keyword id="KW-1185">Reference proteome</keyword>
<keyword id="KW-0808">Transferase</keyword>
<proteinExistence type="inferred from homology"/>
<gene>
    <name evidence="1" type="primary">dinB</name>
    <name type="ordered locus">SP_0458</name>
</gene>
<sequence length="353" mass="39880">MLIFPLLNDLSRKIIHIDMDAFFAAVEIRDNPKLRGKPVIIGSDPRQTGGRGVVSTCSYEARAFGVHSAMSSKEAYERCPQAVFISGNYEKYKSVGLQIRAIFKRYTDLIEPMSIDEAYLDVTENKLGIKSAVKIARLIQKDIWQELHLTASAGVSYNKFLAKMASDYQKPHGLTVILPEQAEDFLKQMDISKFHGVGKKTVERLHQMGVFTGADLLEVPEVTLIDRFGRLGYDLYRKARGIHNSPVKSNRIRKSIGKEKTYGKILLAEEDIKKELTLLSEKVALNLHQQEKAGKIVILKIRYEDFSTLTKRKSLAQKTQDASQISQIALQLYEELSKKERGVRLLGITMTGF</sequence>
<evidence type="ECO:0000255" key="1">
    <source>
        <dbReference type="HAMAP-Rule" id="MF_01113"/>
    </source>
</evidence>
<feature type="chain" id="PRO_0000173954" description="DNA polymerase IV">
    <location>
        <begin position="1"/>
        <end position="353"/>
    </location>
</feature>
<feature type="domain" description="UmuC" evidence="1">
    <location>
        <begin position="14"/>
        <end position="198"/>
    </location>
</feature>
<feature type="active site" evidence="1">
    <location>
        <position position="117"/>
    </location>
</feature>
<feature type="binding site" evidence="1">
    <location>
        <position position="18"/>
    </location>
    <ligand>
        <name>Mg(2+)</name>
        <dbReference type="ChEBI" id="CHEBI:18420"/>
    </ligand>
</feature>
<feature type="binding site" evidence="1">
    <location>
        <position position="116"/>
    </location>
    <ligand>
        <name>Mg(2+)</name>
        <dbReference type="ChEBI" id="CHEBI:18420"/>
    </ligand>
</feature>
<feature type="site" description="Substrate discrimination" evidence="1">
    <location>
        <position position="23"/>
    </location>
</feature>
<organism>
    <name type="scientific">Streptococcus pneumoniae serotype 4 (strain ATCC BAA-334 / TIGR4)</name>
    <dbReference type="NCBI Taxonomy" id="170187"/>
    <lineage>
        <taxon>Bacteria</taxon>
        <taxon>Bacillati</taxon>
        <taxon>Bacillota</taxon>
        <taxon>Bacilli</taxon>
        <taxon>Lactobacillales</taxon>
        <taxon>Streptococcaceae</taxon>
        <taxon>Streptococcus</taxon>
    </lineage>
</organism>